<sequence length="92" mass="10046">MELELRFFATFREVVGQKSIYWRVDDDATVGDVLRSLEAEYDGLAGRLIEDGEVKPHVNVLKNGREVVHLDGMATALDDGDAVSVFPPVAGG</sequence>
<name>SAMP3_HALVD</name>
<keyword id="KW-0002">3D-structure</keyword>
<keyword id="KW-1017">Isopeptide bond</keyword>
<keyword id="KW-0547">Nucleotide-binding</keyword>
<keyword id="KW-0597">Phosphoprotein</keyword>
<keyword id="KW-1185">Reference proteome</keyword>
<keyword id="KW-0832">Ubl conjugation</keyword>
<keyword id="KW-0833">Ubl conjugation pathway</keyword>
<accession>D4GVB0</accession>
<comment type="function">
    <text evidence="1 3">Functions as a protein modifier covalently attached to lysine residues of substrate proteins. The protein modification process is termed sampylation and involves the formation of an isopeptide bond between the SAMP3 C-terminal glycine carboxylate and the epsilon-amino group of lysine residues on target proteins. Seems to be able to form polymeric chains with itself at Lys-18, Lys-55 and Lys-62, similar to ubiquitin and other ubiquitin-like proteins. SAMP3 appears not to serve as a proteolytic signal in the cell to target proteins for degradation by proteasomes. May regulate molybdenum cofactor (MoCo) biosynthesis by inhibiting the activity of MPT synthase MoaE under aerobic conditions, providing a hierarchy of oxygen use prior to that of alternative electron acceptors such as DMSO.</text>
</comment>
<comment type="subunit">
    <text evidence="2">Monomer.</text>
</comment>
<comment type="induction">
    <text evidence="3">Up-regulated by the addition of dimethyl sulfoxide to aerobically growing cells. These conditions also increase the levels of SAMP3 conjugates in cells.</text>
</comment>
<comment type="PTM">
    <text>The C-terminal glycine is likely acyl-adenylated (-COAMP) by UbaA.</text>
</comment>
<comment type="disruption phenotype">
    <text evidence="1">Cells lacking this gene grow similarly to wild-type in the presence of either DMSO or oxygen as the terminal electron acceptor; thus, SAMP3 is not needed for DMSO respiration, suggesting that it is not required for molybdenum cofactor (MoCo) biosynthesis. tRNA thiolation is not affected.</text>
</comment>
<dbReference type="EMBL" id="CP001956">
    <property type="protein sequence ID" value="ADE02783.2"/>
    <property type="molecule type" value="Genomic_DNA"/>
</dbReference>
<dbReference type="RefSeq" id="WP_004042069.1">
    <property type="nucleotide sequence ID" value="NC_013967.1"/>
</dbReference>
<dbReference type="PDB" id="2M19">
    <property type="method" value="NMR"/>
    <property type="chains" value="A=1-92"/>
</dbReference>
<dbReference type="PDBsum" id="2M19"/>
<dbReference type="BMRB" id="D4GVB0"/>
<dbReference type="SMR" id="D4GVB0"/>
<dbReference type="STRING" id="309800.HVO_2177"/>
<dbReference type="PaxDb" id="309800-C498_06178"/>
<dbReference type="EnsemblBacteria" id="ADE02783">
    <property type="protein sequence ID" value="ADE02783"/>
    <property type="gene ID" value="HVO_2177"/>
</dbReference>
<dbReference type="GeneID" id="8923994"/>
<dbReference type="KEGG" id="hvo:HVO_2177"/>
<dbReference type="eggNOG" id="arCOG00536">
    <property type="taxonomic scope" value="Archaea"/>
</dbReference>
<dbReference type="HOGENOM" id="CLU_114601_1_2_2"/>
<dbReference type="OrthoDB" id="134663at2157"/>
<dbReference type="EvolutionaryTrace" id="D4GVB0"/>
<dbReference type="Proteomes" id="UP000008243">
    <property type="component" value="Chromosome"/>
</dbReference>
<dbReference type="GO" id="GO:0000166">
    <property type="term" value="F:nucleotide binding"/>
    <property type="evidence" value="ECO:0007669"/>
    <property type="project" value="UniProtKB-KW"/>
</dbReference>
<dbReference type="CDD" id="cd17505">
    <property type="entry name" value="Ubl_SAMP1_like"/>
    <property type="match status" value="1"/>
</dbReference>
<dbReference type="Gene3D" id="3.10.20.30">
    <property type="match status" value="1"/>
</dbReference>
<dbReference type="InterPro" id="IPR012675">
    <property type="entry name" value="Beta-grasp_dom_sf"/>
</dbReference>
<dbReference type="InterPro" id="IPR010038">
    <property type="entry name" value="MoaD_arc-typ"/>
</dbReference>
<dbReference type="InterPro" id="IPR016155">
    <property type="entry name" value="Mopterin_synth/thiamin_S_b"/>
</dbReference>
<dbReference type="InterPro" id="IPR054834">
    <property type="entry name" value="SAMP1_3"/>
</dbReference>
<dbReference type="InterPro" id="IPR052045">
    <property type="entry name" value="Sulfur_Carrier/Prot_Modifier"/>
</dbReference>
<dbReference type="InterPro" id="IPR003749">
    <property type="entry name" value="ThiS/MoaD-like"/>
</dbReference>
<dbReference type="NCBIfam" id="TIGR01687">
    <property type="entry name" value="moaD_arch"/>
    <property type="match status" value="1"/>
</dbReference>
<dbReference type="NCBIfam" id="NF041918">
    <property type="entry name" value="SAMP1"/>
    <property type="match status" value="1"/>
</dbReference>
<dbReference type="PANTHER" id="PTHR38031:SF1">
    <property type="entry name" value="SULFUR CARRIER PROTEIN CYSO"/>
    <property type="match status" value="1"/>
</dbReference>
<dbReference type="PANTHER" id="PTHR38031">
    <property type="entry name" value="SULFUR CARRIER PROTEIN SLR0821-RELATED"/>
    <property type="match status" value="1"/>
</dbReference>
<dbReference type="Pfam" id="PF02597">
    <property type="entry name" value="ThiS"/>
    <property type="match status" value="1"/>
</dbReference>
<dbReference type="SUPFAM" id="SSF54285">
    <property type="entry name" value="MoaD/ThiS"/>
    <property type="match status" value="1"/>
</dbReference>
<proteinExistence type="evidence at protein level"/>
<organism>
    <name type="scientific">Haloferax volcanii (strain ATCC 29605 / DSM 3757 / JCM 8879 / NBRC 14742 / NCIMB 2012 / VKM B-1768 / DS2)</name>
    <name type="common">Halobacterium volcanii</name>
    <dbReference type="NCBI Taxonomy" id="309800"/>
    <lineage>
        <taxon>Archaea</taxon>
        <taxon>Methanobacteriati</taxon>
        <taxon>Methanobacteriota</taxon>
        <taxon>Stenosarchaea group</taxon>
        <taxon>Halobacteria</taxon>
        <taxon>Halobacteriales</taxon>
        <taxon>Haloferacaceae</taxon>
        <taxon>Haloferax</taxon>
    </lineage>
</organism>
<protein>
    <recommendedName>
        <fullName>Small archaeal modifier protein 3</fullName>
        <shortName>SAMP3</shortName>
    </recommendedName>
    <alternativeName>
        <fullName>Ubiquitin-like small archaeal modifier protein 3</fullName>
    </alternativeName>
</protein>
<gene>
    <name type="primary">samp3</name>
    <name type="ordered locus">HVO_2177</name>
</gene>
<reference key="1">
    <citation type="journal article" date="2010" name="PLoS ONE">
        <title>The complete genome sequence of Haloferax volcanii DS2, a model archaeon.</title>
        <authorList>
            <person name="Hartman A.L."/>
            <person name="Norais C."/>
            <person name="Badger J.H."/>
            <person name="Delmas S."/>
            <person name="Haldenby S."/>
            <person name="Madupu R."/>
            <person name="Robinson J."/>
            <person name="Khouri H."/>
            <person name="Ren Q."/>
            <person name="Lowe T.M."/>
            <person name="Maupin-Furlow J."/>
            <person name="Pohlschroder M."/>
            <person name="Daniels C."/>
            <person name="Pfeiffer F."/>
            <person name="Allers T."/>
            <person name="Eisen J.A."/>
        </authorList>
    </citation>
    <scope>NUCLEOTIDE SEQUENCE [LARGE SCALE GENOMIC DNA]</scope>
    <source>
        <strain>ATCC 29605 / DSM 3757 / JCM 8879 / NBRC 14742 / NCIMB 2012 / VKM B-1768 / DS2</strain>
    </source>
</reference>
<reference key="2">
    <citation type="journal article" date="2011" name="Proc. Natl. Acad. Sci. U.S.A.">
        <title>E1- and ubiquitin-like proteins provide a direct link between protein conjugation and sulfur transfer in archaea.</title>
        <authorList>
            <person name="Miranda H.V."/>
            <person name="Nembhard N."/>
            <person name="Su D."/>
            <person name="Hepowit N."/>
            <person name="Krause D.J."/>
            <person name="Pritz J.R."/>
            <person name="Phillips C."/>
            <person name="Soll D."/>
            <person name="Maupin-Furlow J.A."/>
        </authorList>
    </citation>
    <scope>FUNCTION</scope>
    <scope>AMPYLATION AT GLY-92</scope>
    <scope>DISRUPTION PHENOTYPE</scope>
    <source>
        <strain>DS2 / DS70</strain>
    </source>
</reference>
<reference key="3">
    <citation type="journal article" date="2014" name="Mol. Cell. Proteomics">
        <title>Archaeal ubiquitin-like SAMP3 is isopeptide-linked to proteins via a UbaA-dependent mechanism.</title>
        <authorList>
            <person name="Miranda H.V."/>
            <person name="Antelmann H."/>
            <person name="Hepowit N."/>
            <person name="Chavarria N.E."/>
            <person name="Krause D.J."/>
            <person name="Pritz J.R."/>
            <person name="Basell K."/>
            <person name="Becher D."/>
            <person name="Humbard M.A."/>
            <person name="Brocchieri L."/>
            <person name="Maupin-Furlow J.A."/>
        </authorList>
    </citation>
    <scope>FUNCTION AS A PROTEIN MODIFIER</scope>
    <scope>PROTEIN TARGETS</scope>
    <scope>CROSS-LINK</scope>
    <scope>INDUCTION</scope>
    <scope>MUTAGENESIS OF 91-GLY-GLY-92</scope>
    <scope>IDENTIFICATION OF START SITE</scope>
    <source>
        <strain>DS2 / DS70</strain>
    </source>
</reference>
<reference key="4">
    <citation type="journal article" date="2013" name="Protein Sci.">
        <title>Crystal structure of the ubiquitin-like small archaeal modifier protein 2 from Haloferax volcanii.</title>
        <authorList>
            <person name="Li Y."/>
            <person name="Maciejewski M.W."/>
            <person name="Martin J."/>
            <person name="Jin K."/>
            <person name="Zhang Y."/>
            <person name="Maupin-Furlow J.A."/>
            <person name="Hao B."/>
        </authorList>
    </citation>
    <scope>STRUCTURE BY NMR</scope>
    <scope>SUBUNIT</scope>
    <source>
        <strain>ATCC 29605 / DSM 3757 / JCM 8879 / NBRC 14742 / NCIMB 2012 / VKM B-1768 / DS2</strain>
    </source>
</reference>
<reference key="5">
    <citation type="journal article" date="2020" name="Nat. Commun.">
        <title>The Archaeal Proteome Project advances knowledge about archaeal cell biology through comprehensive proteomics.</title>
        <authorList>
            <person name="Schulze S."/>
            <person name="Adams Z."/>
            <person name="Cerletti M."/>
            <person name="De Castro R."/>
            <person name="Ferreira-Cerca S."/>
            <person name="Fufezan C."/>
            <person name="Gimenez M.I."/>
            <person name="Hippler M."/>
            <person name="Jevtic Z."/>
            <person name="Knueppel R."/>
            <person name="Legerme G."/>
            <person name="Lenz C."/>
            <person name="Marchfelder A."/>
            <person name="Maupin-Furlow J."/>
            <person name="Paggi R.A."/>
            <person name="Pfeiffer F."/>
            <person name="Poetsch A."/>
            <person name="Urlaub H."/>
            <person name="Pohlschroder M."/>
        </authorList>
    </citation>
    <scope>SEQUENCE REVISION TO N-TERMINUS</scope>
    <scope>IDENTIFICATION BY MASS SPECTROMETRY</scope>
    <source>
        <strain>ATCC 29605 / DSM 3757 / JCM 8879 / NBRC 14742 / NCIMB 2012 / VKM B-1768 / DS2</strain>
    </source>
</reference>
<evidence type="ECO:0000269" key="1">
    <source>
    </source>
</evidence>
<evidence type="ECO:0000269" key="2">
    <source>
    </source>
</evidence>
<evidence type="ECO:0000269" key="3">
    <source>
    </source>
</evidence>
<evidence type="ECO:0007829" key="4">
    <source>
        <dbReference type="PDB" id="2M19"/>
    </source>
</evidence>
<feature type="chain" id="PRO_0000428940" description="Small archaeal modifier protein 3">
    <location>
        <begin position="1"/>
        <end position="92"/>
    </location>
</feature>
<feature type="modified residue" description="Glycyl adenylate; alternate" evidence="1">
    <location>
        <position position="92"/>
    </location>
</feature>
<feature type="cross-link" description="Glycyl lysine isopeptide (Lys-Gly) (interchain with G-Cter in SAMP3)">
    <location>
        <position position="18"/>
    </location>
</feature>
<feature type="cross-link" description="Glycyl lysine isopeptide (Lys-Gly) (interchain with G-Cter in SAMP3)">
    <location>
        <position position="55"/>
    </location>
</feature>
<feature type="cross-link" description="Glycyl lysine isopeptide (Lys-Gly) (interchain with G-Cter in SAMP3)">
    <location>
        <position position="62"/>
    </location>
</feature>
<feature type="cross-link" description="Glycyl lysine isopeptide (Gly-Lys) (interchain with K-? in acceptor proteins); alternate">
    <location>
        <position position="92"/>
    </location>
</feature>
<feature type="mutagenesis site" description="Abolishes conjugation of SAMP3 to protein targets." evidence="3">
    <location>
        <begin position="91"/>
        <end position="92"/>
    </location>
</feature>
<feature type="strand" evidence="4">
    <location>
        <begin position="1"/>
        <end position="7"/>
    </location>
</feature>
<feature type="helix" evidence="4">
    <location>
        <begin position="10"/>
        <end position="15"/>
    </location>
</feature>
<feature type="strand" evidence="4">
    <location>
        <begin position="18"/>
        <end position="25"/>
    </location>
</feature>
<feature type="helix" evidence="4">
    <location>
        <begin position="30"/>
        <end position="40"/>
    </location>
</feature>
<feature type="helix" evidence="4">
    <location>
        <begin position="42"/>
        <end position="44"/>
    </location>
</feature>
<feature type="turn" evidence="4">
    <location>
        <begin position="45"/>
        <end position="48"/>
    </location>
</feature>
<feature type="strand" evidence="4">
    <location>
        <begin position="59"/>
        <end position="62"/>
    </location>
</feature>
<feature type="strand" evidence="4">
    <location>
        <begin position="72"/>
        <end position="75"/>
    </location>
</feature>
<feature type="strand" evidence="4">
    <location>
        <begin position="82"/>
        <end position="86"/>
    </location>
</feature>